<feature type="chain" id="PRO_1000024954" description="Quinolinate synthase">
    <location>
        <begin position="1"/>
        <end position="347"/>
    </location>
</feature>
<feature type="binding site" evidence="1">
    <location>
        <position position="47"/>
    </location>
    <ligand>
        <name>iminosuccinate</name>
        <dbReference type="ChEBI" id="CHEBI:77875"/>
    </ligand>
</feature>
<feature type="binding site" evidence="1">
    <location>
        <position position="68"/>
    </location>
    <ligand>
        <name>iminosuccinate</name>
        <dbReference type="ChEBI" id="CHEBI:77875"/>
    </ligand>
</feature>
<feature type="binding site" evidence="1">
    <location>
        <position position="113"/>
    </location>
    <ligand>
        <name>[4Fe-4S] cluster</name>
        <dbReference type="ChEBI" id="CHEBI:49883"/>
    </ligand>
</feature>
<feature type="binding site" evidence="1">
    <location>
        <begin position="139"/>
        <end position="141"/>
    </location>
    <ligand>
        <name>iminosuccinate</name>
        <dbReference type="ChEBI" id="CHEBI:77875"/>
    </ligand>
</feature>
<feature type="binding site" evidence="1">
    <location>
        <position position="156"/>
    </location>
    <ligand>
        <name>iminosuccinate</name>
        <dbReference type="ChEBI" id="CHEBI:77875"/>
    </ligand>
</feature>
<feature type="binding site" evidence="1">
    <location>
        <position position="200"/>
    </location>
    <ligand>
        <name>[4Fe-4S] cluster</name>
        <dbReference type="ChEBI" id="CHEBI:49883"/>
    </ligand>
</feature>
<feature type="binding site" evidence="1">
    <location>
        <begin position="226"/>
        <end position="228"/>
    </location>
    <ligand>
        <name>iminosuccinate</name>
        <dbReference type="ChEBI" id="CHEBI:77875"/>
    </ligand>
</feature>
<feature type="binding site" evidence="1">
    <location>
        <position position="243"/>
    </location>
    <ligand>
        <name>iminosuccinate</name>
        <dbReference type="ChEBI" id="CHEBI:77875"/>
    </ligand>
</feature>
<feature type="binding site" evidence="1">
    <location>
        <position position="297"/>
    </location>
    <ligand>
        <name>[4Fe-4S] cluster</name>
        <dbReference type="ChEBI" id="CHEBI:49883"/>
    </ligand>
</feature>
<dbReference type="EC" id="2.5.1.72" evidence="1"/>
<dbReference type="EMBL" id="CP000247">
    <property type="protein sequence ID" value="ABG68780.1"/>
    <property type="molecule type" value="Genomic_DNA"/>
</dbReference>
<dbReference type="RefSeq" id="WP_000115276.1">
    <property type="nucleotide sequence ID" value="NC_008253.1"/>
</dbReference>
<dbReference type="SMR" id="Q0TJV1"/>
<dbReference type="KEGG" id="ecp:ECP_0761"/>
<dbReference type="HOGENOM" id="CLU_047382_1_0_6"/>
<dbReference type="UniPathway" id="UPA00253">
    <property type="reaction ID" value="UER00327"/>
</dbReference>
<dbReference type="Proteomes" id="UP000009182">
    <property type="component" value="Chromosome"/>
</dbReference>
<dbReference type="GO" id="GO:0005829">
    <property type="term" value="C:cytosol"/>
    <property type="evidence" value="ECO:0007669"/>
    <property type="project" value="TreeGrafter"/>
</dbReference>
<dbReference type="GO" id="GO:0051539">
    <property type="term" value="F:4 iron, 4 sulfur cluster binding"/>
    <property type="evidence" value="ECO:0007669"/>
    <property type="project" value="UniProtKB-KW"/>
</dbReference>
<dbReference type="GO" id="GO:0046872">
    <property type="term" value="F:metal ion binding"/>
    <property type="evidence" value="ECO:0007669"/>
    <property type="project" value="UniProtKB-KW"/>
</dbReference>
<dbReference type="GO" id="GO:0008987">
    <property type="term" value="F:quinolinate synthetase A activity"/>
    <property type="evidence" value="ECO:0007669"/>
    <property type="project" value="UniProtKB-UniRule"/>
</dbReference>
<dbReference type="GO" id="GO:0034628">
    <property type="term" value="P:'de novo' NAD biosynthetic process from L-aspartate"/>
    <property type="evidence" value="ECO:0007669"/>
    <property type="project" value="TreeGrafter"/>
</dbReference>
<dbReference type="FunFam" id="3.40.50.10800:FF:000001">
    <property type="entry name" value="Quinolinate synthase A"/>
    <property type="match status" value="1"/>
</dbReference>
<dbReference type="FunFam" id="3.40.50.10800:FF:000003">
    <property type="entry name" value="Quinolinate synthase A"/>
    <property type="match status" value="1"/>
</dbReference>
<dbReference type="Gene3D" id="3.40.50.10800">
    <property type="entry name" value="NadA-like"/>
    <property type="match status" value="3"/>
</dbReference>
<dbReference type="HAMAP" id="MF_00567">
    <property type="entry name" value="NadA_type1"/>
    <property type="match status" value="1"/>
</dbReference>
<dbReference type="InterPro" id="IPR003473">
    <property type="entry name" value="NadA"/>
</dbReference>
<dbReference type="InterPro" id="IPR036094">
    <property type="entry name" value="NadA_sf"/>
</dbReference>
<dbReference type="InterPro" id="IPR023513">
    <property type="entry name" value="Quinolinate_synth_A_type1"/>
</dbReference>
<dbReference type="NCBIfam" id="TIGR00550">
    <property type="entry name" value="nadA"/>
    <property type="match status" value="1"/>
</dbReference>
<dbReference type="NCBIfam" id="NF006877">
    <property type="entry name" value="PRK09375.1-1"/>
    <property type="match status" value="1"/>
</dbReference>
<dbReference type="NCBIfam" id="NF006878">
    <property type="entry name" value="PRK09375.1-2"/>
    <property type="match status" value="1"/>
</dbReference>
<dbReference type="PANTHER" id="PTHR30573:SF0">
    <property type="entry name" value="QUINOLINATE SYNTHASE, CHLOROPLASTIC"/>
    <property type="match status" value="1"/>
</dbReference>
<dbReference type="PANTHER" id="PTHR30573">
    <property type="entry name" value="QUINOLINATE SYNTHETASE A"/>
    <property type="match status" value="1"/>
</dbReference>
<dbReference type="Pfam" id="PF02445">
    <property type="entry name" value="NadA"/>
    <property type="match status" value="1"/>
</dbReference>
<dbReference type="SUPFAM" id="SSF142754">
    <property type="entry name" value="NadA-like"/>
    <property type="match status" value="1"/>
</dbReference>
<reference key="1">
    <citation type="journal article" date="2006" name="Mol. Microbiol.">
        <title>Role of pathogenicity island-associated integrases in the genome plasticity of uropathogenic Escherichia coli strain 536.</title>
        <authorList>
            <person name="Hochhut B."/>
            <person name="Wilde C."/>
            <person name="Balling G."/>
            <person name="Middendorf B."/>
            <person name="Dobrindt U."/>
            <person name="Brzuszkiewicz E."/>
            <person name="Gottschalk G."/>
            <person name="Carniel E."/>
            <person name="Hacker J."/>
        </authorList>
    </citation>
    <scope>NUCLEOTIDE SEQUENCE [LARGE SCALE GENOMIC DNA]</scope>
    <source>
        <strain>536 / UPEC</strain>
    </source>
</reference>
<sequence length="347" mass="38184">MSVMFDPDTAIYPFPPKPTPLSIDEKAYYREKIKRLLKERNAVMVAHYYTDPEIQQLAEETGGCISDSLEMARFGAKHPASTLLVAGVRFMGETAKILSPEKTILMPTLQAECSLDLGCPVEEFNAFCDAHPDRTVVVYANTSAAVKARADWVVTSSIAVELIDHLDSLGEKIIWAPDKHLGCYVQKQTGADILCWQGACIVHDEFKTQALTRLQEEYPDAAILVHPESPQAIVEMADAVGSTSQLIAAAKTLPHQRLIVATDRGIFYKMQQAVPDKELLEAPTAGEGATCRSCAHCPWMAMNGLQAIAEALELEGSNHEVYVDERLLERALVPLNRMLDFAATLRG</sequence>
<gene>
    <name evidence="1" type="primary">nadA</name>
    <name type="ordered locus">ECP_0761</name>
</gene>
<proteinExistence type="inferred from homology"/>
<comment type="function">
    <text evidence="1">Catalyzes the condensation of iminoaspartate with dihydroxyacetone phosphate to form quinolinate.</text>
</comment>
<comment type="catalytic activity">
    <reaction evidence="1">
        <text>iminosuccinate + dihydroxyacetone phosphate = quinolinate + phosphate + 2 H2O + H(+)</text>
        <dbReference type="Rhea" id="RHEA:25888"/>
        <dbReference type="ChEBI" id="CHEBI:15377"/>
        <dbReference type="ChEBI" id="CHEBI:15378"/>
        <dbReference type="ChEBI" id="CHEBI:29959"/>
        <dbReference type="ChEBI" id="CHEBI:43474"/>
        <dbReference type="ChEBI" id="CHEBI:57642"/>
        <dbReference type="ChEBI" id="CHEBI:77875"/>
        <dbReference type="EC" id="2.5.1.72"/>
    </reaction>
    <physiologicalReaction direction="left-to-right" evidence="1">
        <dbReference type="Rhea" id="RHEA:25889"/>
    </physiologicalReaction>
</comment>
<comment type="cofactor">
    <cofactor evidence="1">
        <name>[4Fe-4S] cluster</name>
        <dbReference type="ChEBI" id="CHEBI:49883"/>
    </cofactor>
    <text evidence="1">Binds 1 [4Fe-4S] cluster per subunit.</text>
</comment>
<comment type="pathway">
    <text evidence="1">Cofactor biosynthesis; NAD(+) biosynthesis; quinolinate from iminoaspartate: step 1/1.</text>
</comment>
<comment type="subcellular location">
    <subcellularLocation>
        <location evidence="1">Cytoplasm</location>
    </subcellularLocation>
</comment>
<comment type="similarity">
    <text evidence="1">Belongs to the quinolinate synthase family. Type 1 subfamily.</text>
</comment>
<accession>Q0TJV1</accession>
<evidence type="ECO:0000255" key="1">
    <source>
        <dbReference type="HAMAP-Rule" id="MF_00567"/>
    </source>
</evidence>
<organism>
    <name type="scientific">Escherichia coli O6:K15:H31 (strain 536 / UPEC)</name>
    <dbReference type="NCBI Taxonomy" id="362663"/>
    <lineage>
        <taxon>Bacteria</taxon>
        <taxon>Pseudomonadati</taxon>
        <taxon>Pseudomonadota</taxon>
        <taxon>Gammaproteobacteria</taxon>
        <taxon>Enterobacterales</taxon>
        <taxon>Enterobacteriaceae</taxon>
        <taxon>Escherichia</taxon>
    </lineage>
</organism>
<keyword id="KW-0004">4Fe-4S</keyword>
<keyword id="KW-0963">Cytoplasm</keyword>
<keyword id="KW-0408">Iron</keyword>
<keyword id="KW-0411">Iron-sulfur</keyword>
<keyword id="KW-0479">Metal-binding</keyword>
<keyword id="KW-0662">Pyridine nucleotide biosynthesis</keyword>
<keyword id="KW-0808">Transferase</keyword>
<protein>
    <recommendedName>
        <fullName evidence="1">Quinolinate synthase</fullName>
        <ecNumber evidence="1">2.5.1.72</ecNumber>
    </recommendedName>
</protein>
<name>NADA_ECOL5</name>